<dbReference type="EMBL" id="AF032368">
    <property type="protein sequence ID" value="AAB86957.1"/>
    <property type="molecule type" value="Genomic_DNA"/>
</dbReference>
<dbReference type="EMBL" id="KI964695">
    <property type="protein sequence ID" value="EUC30582.1"/>
    <property type="molecule type" value="Genomic_DNA"/>
</dbReference>
<dbReference type="RefSeq" id="XP_007715108.1">
    <property type="nucleotide sequence ID" value="XM_007716918.1"/>
</dbReference>
<dbReference type="STRING" id="930089.W6XSL9"/>
<dbReference type="KEGG" id="bze:COCCADRAFT_7396"/>
<dbReference type="eggNOG" id="ENOG502S4ZK">
    <property type="taxonomic scope" value="Eukaryota"/>
</dbReference>
<dbReference type="HOGENOM" id="CLU_729561_0_0_1"/>
<dbReference type="OrthoDB" id="5398665at2759"/>
<dbReference type="Proteomes" id="UP000053841">
    <property type="component" value="Unassembled WGS sequence"/>
</dbReference>
<dbReference type="GO" id="GO:0005634">
    <property type="term" value="C:nucleus"/>
    <property type="evidence" value="ECO:0007669"/>
    <property type="project" value="UniProtKB-SubCell"/>
</dbReference>
<dbReference type="GO" id="GO:0008301">
    <property type="term" value="F:DNA binding, bending"/>
    <property type="evidence" value="ECO:0007669"/>
    <property type="project" value="InterPro"/>
</dbReference>
<dbReference type="GO" id="GO:0045895">
    <property type="term" value="P:positive regulation of mating-type specific transcription, DNA-templated"/>
    <property type="evidence" value="ECO:0007669"/>
    <property type="project" value="InterPro"/>
</dbReference>
<dbReference type="GO" id="GO:0007338">
    <property type="term" value="P:single fertilization"/>
    <property type="evidence" value="ECO:0007669"/>
    <property type="project" value="UniProtKB-KW"/>
</dbReference>
<dbReference type="InterPro" id="IPR006856">
    <property type="entry name" value="MATalpha_HMGbox"/>
</dbReference>
<dbReference type="Pfam" id="PF04769">
    <property type="entry name" value="MATalpha_HMGbox"/>
    <property type="match status" value="1"/>
</dbReference>
<dbReference type="PROSITE" id="PS51325">
    <property type="entry name" value="ALPHA_BOX"/>
    <property type="match status" value="1"/>
</dbReference>
<feature type="chain" id="PRO_0000206009" description="Mating-type protein MAT-1">
    <location>
        <begin position="1"/>
        <end position="379"/>
    </location>
</feature>
<feature type="DNA-binding region" description="Alpha box" evidence="2">
    <location>
        <begin position="60"/>
        <end position="117"/>
    </location>
</feature>
<name>MAT1_COCC2</name>
<protein>
    <recommendedName>
        <fullName>Mating-type protein MAT-1</fullName>
    </recommendedName>
</protein>
<proteinExistence type="inferred from homology"/>
<accession>O13402</accession>
<accession>W6XSL9</accession>
<keyword id="KW-0238">DNA-binding</keyword>
<keyword id="KW-0278">Fertilization</keyword>
<keyword id="KW-0539">Nucleus</keyword>
<keyword id="KW-1185">Reference proteome</keyword>
<keyword id="KW-0804">Transcription</keyword>
<keyword id="KW-0805">Transcription regulation</keyword>
<gene>
    <name type="primary">MAT1</name>
</gene>
<comment type="function">
    <text evidence="1">Mating type proteins are sequence specific DNA-binding proteins that act as master switches in fungal differentiation by controlling gene expression in a cell type-specific fashion. Transcriptional activator that induces the transcription of alpha-specific genes.</text>
</comment>
<comment type="subcellular location">
    <subcellularLocation>
        <location evidence="2">Nucleus</location>
    </subcellularLocation>
</comment>
<comment type="similarity">
    <text evidence="2">Belongs to the MATALPHA1 family.</text>
</comment>
<reference key="1">
    <citation type="journal article" date="1998" name="Mycol. Res.">
        <title>The two Cochliobolus mating type genes are conserved among species but one of them is missing in C. victoriae.</title>
        <authorList>
            <person name="Christiansen S.K."/>
            <person name="Wirsel S."/>
            <person name="Yoder O.C."/>
            <person name="Turgeon B.G."/>
        </authorList>
        <dbReference type="AGRICOLA" id="IND21811484"/>
    </citation>
    <scope>NUCLEOTIDE SEQUENCE [GENOMIC DNA]</scope>
    <source>
        <strain>26-R-13</strain>
    </source>
</reference>
<reference evidence="3" key="2">
    <citation type="journal article" date="2013" name="PLoS Genet.">
        <title>Comparative genome structure, secondary metabolite, and effector coding capacity across Cochliobolus pathogens.</title>
        <authorList>
            <person name="Condon B.J."/>
            <person name="Leng Y."/>
            <person name="Wu D."/>
            <person name="Bushley K.E."/>
            <person name="Ohm R.A."/>
            <person name="Otillar R."/>
            <person name="Martin J."/>
            <person name="Schackwitz W."/>
            <person name="Grimwood J."/>
            <person name="MohdZainudin N."/>
            <person name="Xue C."/>
            <person name="Wang R."/>
            <person name="Manning V.A."/>
            <person name="Dhillon B."/>
            <person name="Tu Z.J."/>
            <person name="Steffenson B.J."/>
            <person name="Salamov A."/>
            <person name="Sun H."/>
            <person name="Lowry S."/>
            <person name="LaButti K."/>
            <person name="Han J."/>
            <person name="Copeland A."/>
            <person name="Lindquist E."/>
            <person name="Barry K."/>
            <person name="Schmutz J."/>
            <person name="Baker S.E."/>
            <person name="Ciuffetti L.M."/>
            <person name="Grigoriev I.V."/>
            <person name="Zhong S."/>
            <person name="Turgeon B.G."/>
        </authorList>
    </citation>
    <scope>NUCLEOTIDE SEQUENCE [LARGE SCALE GENOMIC DNA]</scope>
    <source>
        <strain evidence="3">26-R-13</strain>
    </source>
</reference>
<evidence type="ECO:0000250" key="1">
    <source>
        <dbReference type="UniProtKB" id="P0CY06"/>
    </source>
</evidence>
<evidence type="ECO:0000255" key="2">
    <source>
        <dbReference type="PROSITE-ProRule" id="PRU00655"/>
    </source>
</evidence>
<evidence type="ECO:0000312" key="3">
    <source>
        <dbReference type="Proteomes" id="UP000053841"/>
    </source>
</evidence>
<sequence>MDLARDPTGAEIAKFIATRTGAQMVQLMRCIKEPAAQAAFTAKLLVASPAVSGQPATPEKARKALNAFVGFRCYYITIPMFKPWPMKKLSNLIGLLWEADPNKSLWSLMAKAWSTIRDQIGKDQAPLNQFFRIICPHLKLPDPASYLEIHGWILNVNEEGDPTISRSADSEFASIGTGNTDMTLSVEDIITYVQSLGYAHGFILDDNKPSSTFLGHSVSSTLEKNTSAISATQATSKAAHARFLVRNKRRAKRQAVRNASYRASLDQDILIAHQLDPAPVDNHVPDCYSTTAPVLNQSPNQFYDGLTTLLSDQIPTIQDDAGHLDNAHLFNDCSLPGDVSFMNIDDFTTNMPNLIDYDAFRLGADEDVTLPIFDDITQI</sequence>
<organism>
    <name type="scientific">Cochliobolus carbonum (strain 26-R-13)</name>
    <name type="common">Maize leaf spot fungus</name>
    <name type="synonym">Bipolaris zeicola</name>
    <dbReference type="NCBI Taxonomy" id="930089"/>
    <lineage>
        <taxon>Eukaryota</taxon>
        <taxon>Fungi</taxon>
        <taxon>Dikarya</taxon>
        <taxon>Ascomycota</taxon>
        <taxon>Pezizomycotina</taxon>
        <taxon>Dothideomycetes</taxon>
        <taxon>Pleosporomycetidae</taxon>
        <taxon>Pleosporales</taxon>
        <taxon>Pleosporineae</taxon>
        <taxon>Pleosporaceae</taxon>
        <taxon>Bipolaris</taxon>
    </lineage>
</organism>